<accession>Q2T9Q6</accession>
<gene>
    <name type="primary">TEKT2</name>
</gene>
<keyword id="KW-0002">3D-structure</keyword>
<keyword id="KW-0966">Cell projection</keyword>
<keyword id="KW-0969">Cilium</keyword>
<keyword id="KW-0175">Coiled coil</keyword>
<keyword id="KW-0963">Cytoplasm</keyword>
<keyword id="KW-0206">Cytoskeleton</keyword>
<keyword id="KW-0282">Flagellum</keyword>
<keyword id="KW-0493">Microtubule</keyword>
<keyword id="KW-0597">Phosphoprotein</keyword>
<keyword id="KW-1185">Reference proteome</keyword>
<keyword id="KW-0832">Ubl conjugation</keyword>
<evidence type="ECO:0000250" key="1">
    <source>
        <dbReference type="UniProtKB" id="Q1W6C3"/>
    </source>
</evidence>
<evidence type="ECO:0000250" key="2">
    <source>
        <dbReference type="UniProtKB" id="Q922G7"/>
    </source>
</evidence>
<evidence type="ECO:0000255" key="3"/>
<evidence type="ECO:0000269" key="4">
    <source>
    </source>
</evidence>
<evidence type="ECO:0000269" key="5">
    <source>
    </source>
</evidence>
<evidence type="ECO:0000305" key="6"/>
<evidence type="ECO:0007744" key="7">
    <source>
        <dbReference type="PDB" id="7RRO"/>
    </source>
</evidence>
<evidence type="ECO:0007744" key="8">
    <source>
        <dbReference type="PDB" id="8OTZ"/>
    </source>
</evidence>
<comment type="function">
    <text evidence="2 4 5">Microtubule inner protein (MIP) part of the dynein-decorated doublet microtubules (DMTs) in cilia and flagellar axoneme (PubMed:34715025, PubMed:37327785). Plays a key role in the assembly or attachment of the inner dynein arm to microtubules in sperm flagella and tracheal cilia (By similarity). Forms filamentous polymers in the walls of ciliary and flagellar microtubules (PubMed:34715025).</text>
</comment>
<comment type="subunit">
    <text evidence="2 5">Microtubule inner protein component of sperm flagellar doublet microtubules (PubMed:37327785). May interact with CCDC172 (By similarity).</text>
</comment>
<comment type="subcellular location">
    <subcellularLocation>
        <location evidence="4">Cytoplasm</location>
        <location evidence="4">Cytoskeleton</location>
        <location evidence="4">Cilium axoneme</location>
    </subcellularLocation>
    <subcellularLocation>
        <location evidence="5">Cytoplasm</location>
        <location evidence="5">Cytoskeleton</location>
        <location evidence="5">Flagellum axoneme</location>
    </subcellularLocation>
    <subcellularLocation>
        <location evidence="2">Cytoplasm</location>
        <location evidence="2">Cytoskeleton</location>
        <location evidence="2">Microtubule organizing center</location>
    </subcellularLocation>
    <text evidence="2">Colocalized with CCDC172 at the perinuclear region.</text>
</comment>
<comment type="tissue specificity">
    <text evidence="4">Expressed in trachea multiciliated cells.</text>
</comment>
<comment type="PTM">
    <text evidence="1">Tyrosine phosphorylated.</text>
</comment>
<comment type="PTM">
    <text evidence="2">Ubiquitinated, leading to its degradation. Deubiquitinated by USP16, promoting its stability.</text>
</comment>
<comment type="similarity">
    <text evidence="6">Belongs to the tektin family.</text>
</comment>
<sequence length="430" mass="49886">MATLSVKPSPRFRLPDWQTNSYLLSTNAERQRDASHQIRQEARVLRNETNNQTIWDEHDNRTRLAERIDTVSRWKEMLDKCLTDLDAEIDALAQMKESAEQNLQAKNLPLDVAIECLTLRESRRDIDVVKDPVEEELHKEVEVIEATKKALQQKISQAFEKLFLLQEARQRLNSDHRGKMETLDIDRGCLSLNLTSPNISLKINPTRVPNGSTSLQQWDDLSRFNKDHGEAEMKKAIELREAIALTIAETNNELEAQRVATEFAFRKRLREMEKLYSELKWQEKNTLEEIAELHEDIRHLEEDLRRKLQNLKLCHTRLEARTYRPNVELCRDQAQYGLTDEVHQLEATIAALKQKLAQAQDALDALYKHLARLQADIACKANSMLLDTKCMDTRRKLTVPAEKFVPEVDTFTRTTNRTLSPLKTCQLELA</sequence>
<dbReference type="EMBL" id="BC111312">
    <property type="protein sequence ID" value="AAI11313.1"/>
    <property type="molecule type" value="mRNA"/>
</dbReference>
<dbReference type="RefSeq" id="NP_001033192.1">
    <property type="nucleotide sequence ID" value="NM_001038103.2"/>
</dbReference>
<dbReference type="RefSeq" id="XP_024844278.1">
    <property type="nucleotide sequence ID" value="XM_024988510.2"/>
</dbReference>
<dbReference type="RefSeq" id="XP_059739977.1">
    <property type="nucleotide sequence ID" value="XM_059883994.1"/>
</dbReference>
<dbReference type="PDB" id="7RRO">
    <property type="method" value="EM"/>
    <property type="resolution" value="3.40 A"/>
    <property type="chains" value="B0/B1/B2/B3/B4/B5/B6/B7/B8/B9=1-430"/>
</dbReference>
<dbReference type="PDB" id="8OTZ">
    <property type="method" value="EM"/>
    <property type="resolution" value="3.60 A"/>
    <property type="chains" value="Cq/Cr/Cs/Ct/Cu/Cv/Cw/Cx/Cy=1-430"/>
</dbReference>
<dbReference type="PDB" id="9CPB">
    <property type="method" value="EM"/>
    <property type="resolution" value="3.52 A"/>
    <property type="chains" value="5Q/5R/5S/5T/5V/5W/5X/5Y=1-430"/>
</dbReference>
<dbReference type="PDBsum" id="7RRO"/>
<dbReference type="PDBsum" id="8OTZ"/>
<dbReference type="PDBsum" id="9CPB"/>
<dbReference type="EMDB" id="EMD-17187"/>
<dbReference type="EMDB" id="EMD-24664"/>
<dbReference type="EMDB" id="EMD-45801"/>
<dbReference type="EMDB" id="EMD-50664"/>
<dbReference type="SMR" id="Q2T9Q6"/>
<dbReference type="FunCoup" id="Q2T9Q6">
    <property type="interactions" value="430"/>
</dbReference>
<dbReference type="STRING" id="9913.ENSBTAP00000028947"/>
<dbReference type="PaxDb" id="9913-ENSBTAP00000028947"/>
<dbReference type="Ensembl" id="ENSBTAT00000028947.6">
    <property type="protein sequence ID" value="ENSBTAP00000028947.4"/>
    <property type="gene ID" value="ENSBTAG00000021714.6"/>
</dbReference>
<dbReference type="GeneID" id="514463"/>
<dbReference type="KEGG" id="bta:514463"/>
<dbReference type="CTD" id="27285"/>
<dbReference type="VEuPathDB" id="HostDB:ENSBTAG00000021714"/>
<dbReference type="VGNC" id="VGNC:35737">
    <property type="gene designation" value="TEKT2"/>
</dbReference>
<dbReference type="eggNOG" id="KOG2685">
    <property type="taxonomic scope" value="Eukaryota"/>
</dbReference>
<dbReference type="GeneTree" id="ENSGT00950000182894"/>
<dbReference type="HOGENOM" id="CLU_033588_0_0_1"/>
<dbReference type="InParanoid" id="Q2T9Q6"/>
<dbReference type="OMA" id="FDHRGKM"/>
<dbReference type="OrthoDB" id="440745at2759"/>
<dbReference type="TreeFam" id="TF320754"/>
<dbReference type="Proteomes" id="UP000009136">
    <property type="component" value="Chromosome 3"/>
</dbReference>
<dbReference type="Bgee" id="ENSBTAG00000021714">
    <property type="expression patterns" value="Expressed in spermatid and 81 other cell types or tissues"/>
</dbReference>
<dbReference type="GO" id="GO:0160111">
    <property type="term" value="C:axonemal A tubule inner sheath"/>
    <property type="evidence" value="ECO:0000250"/>
    <property type="project" value="UniProtKB"/>
</dbReference>
<dbReference type="GO" id="GO:0005879">
    <property type="term" value="C:axonemal microtubule"/>
    <property type="evidence" value="ECO:0000314"/>
    <property type="project" value="UniProtKB"/>
</dbReference>
<dbReference type="GO" id="GO:0015630">
    <property type="term" value="C:microtubule cytoskeleton"/>
    <property type="evidence" value="ECO:0000318"/>
    <property type="project" value="GO_Central"/>
</dbReference>
<dbReference type="GO" id="GO:0005815">
    <property type="term" value="C:microtubule organizing center"/>
    <property type="evidence" value="ECO:0000250"/>
    <property type="project" value="UniProtKB"/>
</dbReference>
<dbReference type="GO" id="GO:0036126">
    <property type="term" value="C:sperm flagellum"/>
    <property type="evidence" value="ECO:0000250"/>
    <property type="project" value="UniProtKB"/>
</dbReference>
<dbReference type="GO" id="GO:0060271">
    <property type="term" value="P:cilium assembly"/>
    <property type="evidence" value="ECO:0000318"/>
    <property type="project" value="GO_Central"/>
</dbReference>
<dbReference type="GO" id="GO:0060294">
    <property type="term" value="P:cilium movement involved in cell motility"/>
    <property type="evidence" value="ECO:0000318"/>
    <property type="project" value="GO_Central"/>
</dbReference>
<dbReference type="GO" id="GO:0030317">
    <property type="term" value="P:flagellated sperm motility"/>
    <property type="evidence" value="ECO:0000250"/>
    <property type="project" value="UniProtKB"/>
</dbReference>
<dbReference type="GO" id="GO:0036159">
    <property type="term" value="P:inner dynein arm assembly"/>
    <property type="evidence" value="ECO:0007669"/>
    <property type="project" value="Ensembl"/>
</dbReference>
<dbReference type="InterPro" id="IPR048256">
    <property type="entry name" value="Tektin-like"/>
</dbReference>
<dbReference type="InterPro" id="IPR000435">
    <property type="entry name" value="Tektins"/>
</dbReference>
<dbReference type="PANTHER" id="PTHR19960">
    <property type="entry name" value="TEKTIN"/>
    <property type="match status" value="1"/>
</dbReference>
<dbReference type="PANTHER" id="PTHR19960:SF29">
    <property type="entry name" value="TEKTIN-2"/>
    <property type="match status" value="1"/>
</dbReference>
<dbReference type="Pfam" id="PF03148">
    <property type="entry name" value="Tektin"/>
    <property type="match status" value="1"/>
</dbReference>
<dbReference type="PRINTS" id="PR00511">
    <property type="entry name" value="TEKTIN"/>
</dbReference>
<feature type="chain" id="PRO_0000261173" description="Tektin-2">
    <location>
        <begin position="1"/>
        <end position="430"/>
    </location>
</feature>
<feature type="coiled-coil region" evidence="3">
    <location>
        <begin position="81"/>
        <end position="162"/>
    </location>
</feature>
<feature type="coiled-coil region" evidence="3">
    <location>
        <begin position="265"/>
        <end position="379"/>
    </location>
</feature>
<proteinExistence type="evidence at protein level"/>
<reference key="1">
    <citation type="submission" date="2005-12" db="EMBL/GenBank/DDBJ databases">
        <authorList>
            <consortium name="NIH - Mammalian Gene Collection (MGC) project"/>
        </authorList>
    </citation>
    <scope>NUCLEOTIDE SEQUENCE [LARGE SCALE MRNA]</scope>
    <source>
        <strain>Crossbred X Angus</strain>
        <tissue>Liver</tissue>
    </source>
</reference>
<reference evidence="7" key="2">
    <citation type="journal article" date="2021" name="Cell">
        <title>De novo identification of mammalian ciliary motility proteins using cryo-EM.</title>
        <authorList>
            <person name="Gui M."/>
            <person name="Farley H."/>
            <person name="Anujan P."/>
            <person name="Anderson J.R."/>
            <person name="Maxwell D.W."/>
            <person name="Whitchurch J.B."/>
            <person name="Botsch J.J."/>
            <person name="Qiu T."/>
            <person name="Meleppattu S."/>
            <person name="Singh S.K."/>
            <person name="Zhang Q."/>
            <person name="Thompson J."/>
            <person name="Lucas J.S."/>
            <person name="Bingle C.D."/>
            <person name="Norris D.P."/>
            <person name="Roy S."/>
            <person name="Brown A."/>
        </authorList>
    </citation>
    <scope>STRUCTURE BY ELECTRON MICROSCOPY (3.40 ANGSTROMS)</scope>
    <scope>FUNCTION</scope>
    <scope>SUBCELLULAR LOCATION</scope>
    <scope>TISSUE SPECIFICITY</scope>
</reference>
<reference evidence="8" key="3">
    <citation type="journal article" date="2023" name="Cell">
        <title>Structural specializations of the sperm tail.</title>
        <authorList>
            <person name="Leung M.R."/>
            <person name="Zeng J."/>
            <person name="Wang X."/>
            <person name="Roelofs M.C."/>
            <person name="Huang W."/>
            <person name="Zenezini Chiozzi R."/>
            <person name="Hevler J.F."/>
            <person name="Heck A.J.R."/>
            <person name="Dutcher S.K."/>
            <person name="Brown A."/>
            <person name="Zhang R."/>
            <person name="Zeev-Ben-Mordehai T."/>
        </authorList>
    </citation>
    <scope>STRUCTURE BY ELECTRON MICROSCOPY (3.60 ANGSTROMS)</scope>
    <scope>FUNCTION</scope>
    <scope>SUBUNIT</scope>
    <scope>SUBCELLULAR LOCATION</scope>
</reference>
<organism>
    <name type="scientific">Bos taurus</name>
    <name type="common">Bovine</name>
    <dbReference type="NCBI Taxonomy" id="9913"/>
    <lineage>
        <taxon>Eukaryota</taxon>
        <taxon>Metazoa</taxon>
        <taxon>Chordata</taxon>
        <taxon>Craniata</taxon>
        <taxon>Vertebrata</taxon>
        <taxon>Euteleostomi</taxon>
        <taxon>Mammalia</taxon>
        <taxon>Eutheria</taxon>
        <taxon>Laurasiatheria</taxon>
        <taxon>Artiodactyla</taxon>
        <taxon>Ruminantia</taxon>
        <taxon>Pecora</taxon>
        <taxon>Bovidae</taxon>
        <taxon>Bovinae</taxon>
        <taxon>Bos</taxon>
    </lineage>
</organism>
<name>TEKT2_BOVIN</name>
<protein>
    <recommendedName>
        <fullName>Tektin-2</fullName>
    </recommendedName>
</protein>